<proteinExistence type="evidence at protein level"/>
<comment type="function">
    <text evidence="7 8">Endonuclease that can use RNA and single-stranded DNA as substrates (PubMed:23620482). In contradiction with PubMed:23620482, cannot hydrolyze single-stranded DNA and does not cleave mismatches (PubMed:17651368).</text>
</comment>
<comment type="catalytic activity">
    <reaction evidence="8">
        <text>Endonucleolytic cleavage to 5'-phosphomononucleotide and 5'-phosphooligonucleotide end-products.</text>
        <dbReference type="EC" id="3.1.30.1"/>
    </reaction>
</comment>
<comment type="cofactor">
    <cofactor evidence="8">
        <name>Zn(2+)</name>
        <dbReference type="ChEBI" id="CHEBI:29105"/>
    </cofactor>
    <cofactor evidence="8">
        <name>Mn(2+)</name>
        <dbReference type="ChEBI" id="CHEBI:29035"/>
    </cofactor>
    <text evidence="8">Binds 3 divalent metal cations (PubMed:23620482). Can use Mn(2+) with a lower efficiency than Zn(2+) ions (PubMed:23620482).</text>
</comment>
<comment type="biophysicochemical properties">
    <phDependence>
        <text evidence="8">Optimum pH is 5.5 with RNA and ssDNA as substrates.</text>
    </phDependence>
</comment>
<comment type="subunit">
    <text evidence="1">Monomer.</text>
</comment>
<comment type="similarity">
    <text evidence="10">Belongs to the nuclease type I family.</text>
</comment>
<comment type="sequence caution" evidence="10">
    <conflict type="erroneous gene model prediction">
        <sequence resource="EMBL-CDS" id="CAA18723"/>
    </conflict>
</comment>
<comment type="sequence caution" evidence="10">
    <conflict type="erroneous gene model prediction">
        <sequence resource="EMBL-CDS" id="CAB36803"/>
    </conflict>
</comment>
<comment type="sequence caution" evidence="10">
    <conflict type="erroneous gene model prediction">
        <sequence resource="EMBL-CDS" id="CAB81266"/>
    </conflict>
</comment>
<sequence length="294" mass="33424">MGWSLRMWIVSILVLTQLVNGALCWGDAGHYAVCKIAQSYFEEDTVVAVKKLLPESANGELAAVCSWPDEIKKLPQWRWTSALHFADTPDYKCNYEYSRDCPKDWCVTGAIFNYTNQLMSTSENSQSIVHYNLTEALMFLSHYMGDIHQPLHEGFIGDLGGNKIKVHWYNQETNLHRVWDDMIIESALETYYNSSLPRMIHELQAKLKNGWSNDVPSWESCQLNQTACPNPYASESIDLACKYAYRNATAGTTLGDYYFVSRLPVVEKRLAQGGIRLAGTLNRIFSAKRKLARA</sequence>
<reference key="1">
    <citation type="journal article" date="1999" name="Nature">
        <title>Sequence and analysis of chromosome 4 of the plant Arabidopsis thaliana.</title>
        <authorList>
            <person name="Mayer K.F.X."/>
            <person name="Schueller C."/>
            <person name="Wambutt R."/>
            <person name="Murphy G."/>
            <person name="Volckaert G."/>
            <person name="Pohl T."/>
            <person name="Duesterhoeft A."/>
            <person name="Stiekema W."/>
            <person name="Entian K.-D."/>
            <person name="Terryn N."/>
            <person name="Harris B."/>
            <person name="Ansorge W."/>
            <person name="Brandt P."/>
            <person name="Grivell L.A."/>
            <person name="Rieger M."/>
            <person name="Weichselgartner M."/>
            <person name="de Simone V."/>
            <person name="Obermaier B."/>
            <person name="Mache R."/>
            <person name="Mueller M."/>
            <person name="Kreis M."/>
            <person name="Delseny M."/>
            <person name="Puigdomenech P."/>
            <person name="Watson M."/>
            <person name="Schmidtheini T."/>
            <person name="Reichert B."/>
            <person name="Portetelle D."/>
            <person name="Perez-Alonso M."/>
            <person name="Boutry M."/>
            <person name="Bancroft I."/>
            <person name="Vos P."/>
            <person name="Hoheisel J."/>
            <person name="Zimmermann W."/>
            <person name="Wedler H."/>
            <person name="Ridley P."/>
            <person name="Langham S.-A."/>
            <person name="McCullagh B."/>
            <person name="Bilham L."/>
            <person name="Robben J."/>
            <person name="van der Schueren J."/>
            <person name="Grymonprez B."/>
            <person name="Chuang Y.-J."/>
            <person name="Vandenbussche F."/>
            <person name="Braeken M."/>
            <person name="Weltjens I."/>
            <person name="Voet M."/>
            <person name="Bastiaens I."/>
            <person name="Aert R."/>
            <person name="Defoor E."/>
            <person name="Weitzenegger T."/>
            <person name="Bothe G."/>
            <person name="Ramsperger U."/>
            <person name="Hilbert H."/>
            <person name="Braun M."/>
            <person name="Holzer E."/>
            <person name="Brandt A."/>
            <person name="Peters S."/>
            <person name="van Staveren M."/>
            <person name="Dirkse W."/>
            <person name="Mooijman P."/>
            <person name="Klein Lankhorst R."/>
            <person name="Rose M."/>
            <person name="Hauf J."/>
            <person name="Koetter P."/>
            <person name="Berneiser S."/>
            <person name="Hempel S."/>
            <person name="Feldpausch M."/>
            <person name="Lamberth S."/>
            <person name="Van den Daele H."/>
            <person name="De Keyser A."/>
            <person name="Buysshaert C."/>
            <person name="Gielen J."/>
            <person name="Villarroel R."/>
            <person name="De Clercq R."/>
            <person name="van Montagu M."/>
            <person name="Rogers J."/>
            <person name="Cronin A."/>
            <person name="Quail M.A."/>
            <person name="Bray-Allen S."/>
            <person name="Clark L."/>
            <person name="Doggett J."/>
            <person name="Hall S."/>
            <person name="Kay M."/>
            <person name="Lennard N."/>
            <person name="McLay K."/>
            <person name="Mayes R."/>
            <person name="Pettett A."/>
            <person name="Rajandream M.A."/>
            <person name="Lyne M."/>
            <person name="Benes V."/>
            <person name="Rechmann S."/>
            <person name="Borkova D."/>
            <person name="Bloecker H."/>
            <person name="Scharfe M."/>
            <person name="Grimm M."/>
            <person name="Loehnert T.-H."/>
            <person name="Dose S."/>
            <person name="de Haan M."/>
            <person name="Maarse A.C."/>
            <person name="Schaefer M."/>
            <person name="Mueller-Auer S."/>
            <person name="Gabel C."/>
            <person name="Fuchs M."/>
            <person name="Fartmann B."/>
            <person name="Granderath K."/>
            <person name="Dauner D."/>
            <person name="Herzl A."/>
            <person name="Neumann S."/>
            <person name="Argiriou A."/>
            <person name="Vitale D."/>
            <person name="Liguori R."/>
            <person name="Piravandi E."/>
            <person name="Massenet O."/>
            <person name="Quigley F."/>
            <person name="Clabauld G."/>
            <person name="Muendlein A."/>
            <person name="Felber R."/>
            <person name="Schnabl S."/>
            <person name="Hiller R."/>
            <person name="Schmidt W."/>
            <person name="Lecharny A."/>
            <person name="Aubourg S."/>
            <person name="Chefdor F."/>
            <person name="Cooke R."/>
            <person name="Berger C."/>
            <person name="Monfort A."/>
            <person name="Casacuberta E."/>
            <person name="Gibbons T."/>
            <person name="Weber N."/>
            <person name="Vandenbol M."/>
            <person name="Bargues M."/>
            <person name="Terol J."/>
            <person name="Torres A."/>
            <person name="Perez-Perez A."/>
            <person name="Purnelle B."/>
            <person name="Bent E."/>
            <person name="Johnson S."/>
            <person name="Tacon D."/>
            <person name="Jesse T."/>
            <person name="Heijnen L."/>
            <person name="Schwarz S."/>
            <person name="Scholler P."/>
            <person name="Heber S."/>
            <person name="Francs P."/>
            <person name="Bielke C."/>
            <person name="Frishman D."/>
            <person name="Haase D."/>
            <person name="Lemcke K."/>
            <person name="Mewes H.-W."/>
            <person name="Stocker S."/>
            <person name="Zaccaria P."/>
            <person name="Bevan M."/>
            <person name="Wilson R.K."/>
            <person name="de la Bastide M."/>
            <person name="Habermann K."/>
            <person name="Parnell L."/>
            <person name="Dedhia N."/>
            <person name="Gnoj L."/>
            <person name="Schutz K."/>
            <person name="Huang E."/>
            <person name="Spiegel L."/>
            <person name="Sekhon M."/>
            <person name="Murray J."/>
            <person name="Sheet P."/>
            <person name="Cordes M."/>
            <person name="Abu-Threideh J."/>
            <person name="Stoneking T."/>
            <person name="Kalicki J."/>
            <person name="Graves T."/>
            <person name="Harmon G."/>
            <person name="Edwards J."/>
            <person name="Latreille P."/>
            <person name="Courtney L."/>
            <person name="Cloud J."/>
            <person name="Abbott A."/>
            <person name="Scott K."/>
            <person name="Johnson D."/>
            <person name="Minx P."/>
            <person name="Bentley D."/>
            <person name="Fulton B."/>
            <person name="Miller N."/>
            <person name="Greco T."/>
            <person name="Kemp K."/>
            <person name="Kramer J."/>
            <person name="Fulton L."/>
            <person name="Mardis E."/>
            <person name="Dante M."/>
            <person name="Pepin K."/>
            <person name="Hillier L.W."/>
            <person name="Nelson J."/>
            <person name="Spieth J."/>
            <person name="Ryan E."/>
            <person name="Andrews S."/>
            <person name="Geisel C."/>
            <person name="Layman D."/>
            <person name="Du H."/>
            <person name="Ali J."/>
            <person name="Berghoff A."/>
            <person name="Jones K."/>
            <person name="Drone K."/>
            <person name="Cotton M."/>
            <person name="Joshu C."/>
            <person name="Antonoiu B."/>
            <person name="Zidanic M."/>
            <person name="Strong C."/>
            <person name="Sun H."/>
            <person name="Lamar B."/>
            <person name="Yordan C."/>
            <person name="Ma P."/>
            <person name="Zhong J."/>
            <person name="Preston R."/>
            <person name="Vil D."/>
            <person name="Shekher M."/>
            <person name="Matero A."/>
            <person name="Shah R."/>
            <person name="Swaby I.K."/>
            <person name="O'Shaughnessy A."/>
            <person name="Rodriguez M."/>
            <person name="Hoffman J."/>
            <person name="Till S."/>
            <person name="Granat S."/>
            <person name="Shohdy N."/>
            <person name="Hasegawa A."/>
            <person name="Hameed A."/>
            <person name="Lodhi M."/>
            <person name="Johnson A."/>
            <person name="Chen E."/>
            <person name="Marra M.A."/>
            <person name="Martienssen R."/>
            <person name="McCombie W.R."/>
        </authorList>
    </citation>
    <scope>NUCLEOTIDE SEQUENCE [LARGE SCALE GENOMIC DNA]</scope>
    <source>
        <strain>cv. Columbia</strain>
    </source>
</reference>
<reference key="2">
    <citation type="journal article" date="2017" name="Plant J.">
        <title>Araport11: a complete reannotation of the Arabidopsis thaliana reference genome.</title>
        <authorList>
            <person name="Cheng C.Y."/>
            <person name="Krishnakumar V."/>
            <person name="Chan A.P."/>
            <person name="Thibaud-Nissen F."/>
            <person name="Schobel S."/>
            <person name="Town C.D."/>
        </authorList>
    </citation>
    <scope>GENOME REANNOTATION</scope>
    <source>
        <strain>cv. Columbia</strain>
    </source>
</reference>
<reference key="3">
    <citation type="submission" date="2006-07" db="EMBL/GenBank/DDBJ databases">
        <title>Arabidopsis ORF clones.</title>
        <authorList>
            <person name="Quinitio C."/>
            <person name="Chen H."/>
            <person name="Kim C.J."/>
            <person name="Shinn P."/>
            <person name="Ecker J.R."/>
        </authorList>
    </citation>
    <scope>NUCLEOTIDE SEQUENCE [LARGE SCALE MRNA]</scope>
    <source>
        <strain>cv. Columbia</strain>
    </source>
</reference>
<reference key="4">
    <citation type="submission" date="2002-03" db="EMBL/GenBank/DDBJ databases">
        <title>Full-length cDNA from Arabidopsis thaliana.</title>
        <authorList>
            <person name="Brover V.V."/>
            <person name="Troukhan M.E."/>
            <person name="Alexandrov N.A."/>
            <person name="Lu Y.-P."/>
            <person name="Flavell R.B."/>
            <person name="Feldmann K.A."/>
        </authorList>
    </citation>
    <scope>NUCLEOTIDE SEQUENCE [LARGE SCALE MRNA]</scope>
</reference>
<reference key="5">
    <citation type="journal article" date="2007" name="Plant J.">
        <title>Characterization of Arabidopsis thaliana mismatch specific endonucleases: application to mutation discovery by TILLING in pea.</title>
        <authorList>
            <person name="Triques K."/>
            <person name="Sturbois B."/>
            <person name="Gallais S."/>
            <person name="Dalmais M."/>
            <person name="Chauvin S."/>
            <person name="Clepet C."/>
            <person name="Aubourg S."/>
            <person name="Rameau C."/>
            <person name="Caboche M."/>
            <person name="Bendahmane A."/>
        </authorList>
    </citation>
    <scope>FUNCTION</scope>
    <scope>GENE FAMILY</scope>
    <scope>NOMENCLATURE</scope>
</reference>
<reference key="6">
    <citation type="journal article" date="2013" name="Plant Cell Physiol.">
        <title>The plant s1-like nuclease family has evolved a highly diverse range of catalytic capabilities.</title>
        <authorList>
            <person name="Lesniewicz K."/>
            <person name="Karlowski W.M."/>
            <person name="Pienkowska J.R."/>
            <person name="Krzywkowski P."/>
            <person name="Poreba E."/>
        </authorList>
    </citation>
    <scope>FUNCTION</scope>
    <scope>MUTAGENESIS OF 280-THR--ALA-294</scope>
    <scope>BIOPHYSICOCHEMICAL PROPERTIES</scope>
    <scope>CATALYTIC ACTIVITY</scope>
    <scope>COFACTOR</scope>
    <scope>PROTEOLYTIC CLEAVAGE</scope>
    <scope>GENE FAMILY</scope>
</reference>
<protein>
    <recommendedName>
        <fullName evidence="9">Endonuclease 3</fullName>
        <shortName evidence="9">AtENDO3</shortName>
        <ecNumber evidence="8">3.1.30.1</ecNumber>
    </recommendedName>
    <alternativeName>
        <fullName evidence="9">Deoxyribonuclease ENDO3</fullName>
    </alternativeName>
    <alternativeName>
        <fullName evidence="9">Single-stranded-nucleate endonuclease ENDO3</fullName>
    </alternativeName>
</protein>
<accession>Q8LDW6</accession>
<accession>O65424</accession>
<organism>
    <name type="scientific">Arabidopsis thaliana</name>
    <name type="common">Mouse-ear cress</name>
    <dbReference type="NCBI Taxonomy" id="3702"/>
    <lineage>
        <taxon>Eukaryota</taxon>
        <taxon>Viridiplantae</taxon>
        <taxon>Streptophyta</taxon>
        <taxon>Embryophyta</taxon>
        <taxon>Tracheophyta</taxon>
        <taxon>Spermatophyta</taxon>
        <taxon>Magnoliopsida</taxon>
        <taxon>eudicotyledons</taxon>
        <taxon>Gunneridae</taxon>
        <taxon>Pentapetalae</taxon>
        <taxon>rosids</taxon>
        <taxon>malvids</taxon>
        <taxon>Brassicales</taxon>
        <taxon>Brassicaceae</taxon>
        <taxon>Camelineae</taxon>
        <taxon>Arabidopsis</taxon>
    </lineage>
</organism>
<keyword id="KW-1015">Disulfide bond</keyword>
<keyword id="KW-0255">Endonuclease</keyword>
<keyword id="KW-0325">Glycoprotein</keyword>
<keyword id="KW-0378">Hydrolase</keyword>
<keyword id="KW-0464">Manganese</keyword>
<keyword id="KW-0479">Metal-binding</keyword>
<keyword id="KW-0540">Nuclease</keyword>
<keyword id="KW-1185">Reference proteome</keyword>
<keyword id="KW-0732">Signal</keyword>
<keyword id="KW-0862">Zinc</keyword>
<feature type="signal peptide" evidence="5">
    <location>
        <begin position="1"/>
        <end position="24"/>
    </location>
</feature>
<feature type="chain" id="PRO_0000417621" description="Endonuclease 3">
    <location>
        <begin position="25"/>
        <end position="278"/>
    </location>
</feature>
<feature type="propeptide" id="PRO_0000445542" description="Removed in mature form" evidence="8">
    <location>
        <begin position="279"/>
        <end position="294"/>
    </location>
</feature>
<feature type="region of interest" description="Substrate binding" evidence="4">
    <location>
        <begin position="142"/>
        <end position="191"/>
    </location>
</feature>
<feature type="binding site" evidence="4">
    <location>
        <begin position="25"/>
        <end position="30"/>
    </location>
    <ligand>
        <name>substrate</name>
    </ligand>
</feature>
<feature type="binding site" evidence="4">
    <location>
        <position position="25"/>
    </location>
    <ligand>
        <name>a divalent metal cation</name>
        <dbReference type="ChEBI" id="CHEBI:60240"/>
        <label>3</label>
    </ligand>
</feature>
<feature type="binding site" evidence="4">
    <location>
        <position position="30"/>
    </location>
    <ligand>
        <name>a divalent metal cation</name>
        <dbReference type="ChEBI" id="CHEBI:60240"/>
        <label>3</label>
    </ligand>
</feature>
<feature type="binding site" evidence="4">
    <location>
        <begin position="69"/>
        <end position="75"/>
    </location>
    <ligand>
        <name>substrate</name>
    </ligand>
</feature>
<feature type="binding site" evidence="4">
    <location>
        <position position="69"/>
    </location>
    <ligand>
        <name>a divalent metal cation</name>
        <dbReference type="ChEBI" id="CHEBI:60240"/>
        <label>1</label>
    </ligand>
</feature>
<feature type="binding site" evidence="3">
    <location>
        <begin position="84"/>
        <end position="87"/>
    </location>
    <ligand>
        <name>substrate</name>
    </ligand>
</feature>
<feature type="binding site" evidence="4">
    <location>
        <position position="84"/>
    </location>
    <ligand>
        <name>a divalent metal cation</name>
        <dbReference type="ChEBI" id="CHEBI:60240"/>
        <label>1</label>
    </ligand>
</feature>
<feature type="binding site" evidence="3">
    <location>
        <begin position="94"/>
        <end position="99"/>
    </location>
    <ligand>
        <name>substrate</name>
    </ligand>
</feature>
<feature type="binding site" evidence="4">
    <location>
        <position position="113"/>
    </location>
    <ligand>
        <name>substrate</name>
    </ligand>
</feature>
<feature type="binding site" evidence="4">
    <location>
        <position position="131"/>
    </location>
    <ligand>
        <name>substrate</name>
    </ligand>
</feature>
<feature type="binding site" evidence="4">
    <location>
        <position position="142"/>
    </location>
    <ligand>
        <name>a divalent metal cation</name>
        <dbReference type="ChEBI" id="CHEBI:60240"/>
        <label>1</label>
    </ligand>
</feature>
<feature type="binding site" evidence="4">
    <location>
        <position position="146"/>
    </location>
    <ligand>
        <name>a divalent metal cation</name>
        <dbReference type="ChEBI" id="CHEBI:60240"/>
        <label>1</label>
    </ligand>
</feature>
<feature type="binding site" evidence="4">
    <location>
        <position position="146"/>
    </location>
    <ligand>
        <name>a divalent metal cation</name>
        <dbReference type="ChEBI" id="CHEBI:60240"/>
        <label>3</label>
    </ligand>
</feature>
<feature type="binding site" evidence="4">
    <location>
        <position position="152"/>
    </location>
    <ligand>
        <name>a divalent metal cation</name>
        <dbReference type="ChEBI" id="CHEBI:60240"/>
        <label>2</label>
    </ligand>
</feature>
<feature type="binding site" evidence="4">
    <location>
        <position position="176"/>
    </location>
    <ligand>
        <name>a divalent metal cation</name>
        <dbReference type="ChEBI" id="CHEBI:60240"/>
        <label>2</label>
    </ligand>
</feature>
<feature type="binding site" evidence="4">
    <location>
        <position position="180"/>
    </location>
    <ligand>
        <name>a divalent metal cation</name>
        <dbReference type="ChEBI" id="CHEBI:60240"/>
        <label>2</label>
    </ligand>
</feature>
<feature type="site" description="Important for catalytic activity" evidence="2">
    <location>
        <position position="69"/>
    </location>
</feature>
<feature type="site" description="Important for catalytic activity" evidence="3">
    <location>
        <position position="72"/>
    </location>
</feature>
<feature type="glycosylation site" description="N-linked (GlcNAc...) asparagine" evidence="6">
    <location>
        <position position="113"/>
    </location>
</feature>
<feature type="glycosylation site" description="N-linked (GlcNAc...) asparagine" evidence="6">
    <location>
        <position position="132"/>
    </location>
</feature>
<feature type="glycosylation site" description="N-linked (GlcNAc...) asparagine" evidence="6">
    <location>
        <position position="193"/>
    </location>
</feature>
<feature type="glycosylation site" description="N-linked (GlcNAc...) asparagine" evidence="6">
    <location>
        <position position="224"/>
    </location>
</feature>
<feature type="glycosylation site" description="N-linked (GlcNAc...) asparagine" evidence="6">
    <location>
        <position position="247"/>
    </location>
</feature>
<feature type="disulfide bond" evidence="4">
    <location>
        <begin position="34"/>
        <end position="65"/>
    </location>
</feature>
<feature type="disulfide bond" evidence="4">
    <location>
        <begin position="93"/>
        <end position="241"/>
    </location>
</feature>
<feature type="disulfide bond" evidence="4">
    <location>
        <begin position="101"/>
        <end position="106"/>
    </location>
</feature>
<feature type="disulfide bond" evidence="4">
    <location>
        <begin position="221"/>
        <end position="228"/>
    </location>
</feature>
<feature type="mutagenesis site" description="Loss of activity." evidence="8">
    <location>
        <begin position="280"/>
        <end position="294"/>
    </location>
</feature>
<dbReference type="EC" id="3.1.30.1" evidence="8"/>
<dbReference type="EMBL" id="AL022603">
    <property type="protein sequence ID" value="CAA18723.1"/>
    <property type="status" value="ALT_SEQ"/>
    <property type="molecule type" value="Genomic_DNA"/>
</dbReference>
<dbReference type="EMBL" id="AL035527">
    <property type="protein sequence ID" value="CAB36803.1"/>
    <property type="status" value="ALT_SEQ"/>
    <property type="molecule type" value="Genomic_DNA"/>
</dbReference>
<dbReference type="EMBL" id="AL161555">
    <property type="protein sequence ID" value="CAB81266.1"/>
    <property type="status" value="ALT_SEQ"/>
    <property type="molecule type" value="Genomic_DNA"/>
</dbReference>
<dbReference type="EMBL" id="CP002687">
    <property type="protein sequence ID" value="AEE84477.1"/>
    <property type="molecule type" value="Genomic_DNA"/>
</dbReference>
<dbReference type="EMBL" id="CP002687">
    <property type="protein sequence ID" value="AEE84478.1"/>
    <property type="molecule type" value="Genomic_DNA"/>
</dbReference>
<dbReference type="EMBL" id="BT026061">
    <property type="protein sequence ID" value="ABG48417.1"/>
    <property type="molecule type" value="mRNA"/>
</dbReference>
<dbReference type="EMBL" id="AY085756">
    <property type="protein sequence ID" value="AAM62974.1"/>
    <property type="molecule type" value="mRNA"/>
</dbReference>
<dbReference type="PIR" id="T05167">
    <property type="entry name" value="T05167"/>
</dbReference>
<dbReference type="RefSeq" id="NP_001078420.1">
    <property type="nucleotide sequence ID" value="NM_001084951.2"/>
</dbReference>
<dbReference type="RefSeq" id="NP_567630.1">
    <property type="nucleotide sequence ID" value="NM_118279.3"/>
</dbReference>
<dbReference type="SMR" id="Q8LDW6"/>
<dbReference type="FunCoup" id="Q8LDW6">
    <property type="interactions" value="14"/>
</dbReference>
<dbReference type="STRING" id="3702.Q8LDW6"/>
<dbReference type="GlyCosmos" id="Q8LDW6">
    <property type="glycosylation" value="5 sites, No reported glycans"/>
</dbReference>
<dbReference type="GlyGen" id="Q8LDW6">
    <property type="glycosylation" value="5 sites"/>
</dbReference>
<dbReference type="PaxDb" id="3702-AT4G21590.1"/>
<dbReference type="ProteomicsDB" id="222693"/>
<dbReference type="EnsemblPlants" id="AT4G21590.1">
    <property type="protein sequence ID" value="AT4G21590.1"/>
    <property type="gene ID" value="AT4G21590"/>
</dbReference>
<dbReference type="EnsemblPlants" id="AT4G21590.2">
    <property type="protein sequence ID" value="AT4G21590.2"/>
    <property type="gene ID" value="AT4G21590"/>
</dbReference>
<dbReference type="GeneID" id="828245"/>
<dbReference type="Gramene" id="AT4G21590.1">
    <property type="protein sequence ID" value="AT4G21590.1"/>
    <property type="gene ID" value="AT4G21590"/>
</dbReference>
<dbReference type="Gramene" id="AT4G21590.2">
    <property type="protein sequence ID" value="AT4G21590.2"/>
    <property type="gene ID" value="AT4G21590"/>
</dbReference>
<dbReference type="KEGG" id="ath:AT4G21590"/>
<dbReference type="Araport" id="AT4G21590"/>
<dbReference type="TAIR" id="AT4G21590">
    <property type="gene designation" value="ENDO3"/>
</dbReference>
<dbReference type="eggNOG" id="ENOG502QRXU">
    <property type="taxonomic scope" value="Eukaryota"/>
</dbReference>
<dbReference type="HOGENOM" id="CLU_044365_3_0_1"/>
<dbReference type="InParanoid" id="Q8LDW6"/>
<dbReference type="OMA" id="YKCNYEY"/>
<dbReference type="OrthoDB" id="441446at2759"/>
<dbReference type="PhylomeDB" id="Q8LDW6"/>
<dbReference type="BRENDA" id="3.1.30.1">
    <property type="organism ID" value="399"/>
</dbReference>
<dbReference type="PRO" id="PR:Q8LDW6"/>
<dbReference type="Proteomes" id="UP000006548">
    <property type="component" value="Chromosome 4"/>
</dbReference>
<dbReference type="ExpressionAtlas" id="Q8LDW6">
    <property type="expression patterns" value="baseline and differential"/>
</dbReference>
<dbReference type="GO" id="GO:0004519">
    <property type="term" value="F:endonuclease activity"/>
    <property type="evidence" value="ECO:0000314"/>
    <property type="project" value="UniProtKB"/>
</dbReference>
<dbReference type="GO" id="GO:0046872">
    <property type="term" value="F:metal ion binding"/>
    <property type="evidence" value="ECO:0007669"/>
    <property type="project" value="UniProtKB-KW"/>
</dbReference>
<dbReference type="GO" id="GO:0003676">
    <property type="term" value="F:nucleic acid binding"/>
    <property type="evidence" value="ECO:0007669"/>
    <property type="project" value="InterPro"/>
</dbReference>
<dbReference type="GO" id="GO:0004521">
    <property type="term" value="F:RNA endonuclease activity"/>
    <property type="evidence" value="ECO:0000314"/>
    <property type="project" value="UniProtKB"/>
</dbReference>
<dbReference type="GO" id="GO:0000014">
    <property type="term" value="F:single-stranded DNA endodeoxyribonuclease activity"/>
    <property type="evidence" value="ECO:0000314"/>
    <property type="project" value="UniProtKB"/>
</dbReference>
<dbReference type="GO" id="GO:0006308">
    <property type="term" value="P:DNA catabolic process"/>
    <property type="evidence" value="ECO:0000314"/>
    <property type="project" value="UniProtKB"/>
</dbReference>
<dbReference type="CDD" id="cd11010">
    <property type="entry name" value="S1-P1_nuclease"/>
    <property type="match status" value="1"/>
</dbReference>
<dbReference type="FunFam" id="1.10.575.10:FF:000002">
    <property type="entry name" value="Endonuclease 2"/>
    <property type="match status" value="1"/>
</dbReference>
<dbReference type="Gene3D" id="1.10.575.10">
    <property type="entry name" value="P1 Nuclease"/>
    <property type="match status" value="1"/>
</dbReference>
<dbReference type="InterPro" id="IPR008947">
    <property type="entry name" value="PLipase_C/P1_nuclease_dom_sf"/>
</dbReference>
<dbReference type="InterPro" id="IPR003154">
    <property type="entry name" value="S1/P1nuclease"/>
</dbReference>
<dbReference type="PANTHER" id="PTHR33146:SF16">
    <property type="entry name" value="ENDONUCLEASE 3"/>
    <property type="match status" value="1"/>
</dbReference>
<dbReference type="PANTHER" id="PTHR33146">
    <property type="entry name" value="ENDONUCLEASE 4"/>
    <property type="match status" value="1"/>
</dbReference>
<dbReference type="Pfam" id="PF02265">
    <property type="entry name" value="S1-P1_nuclease"/>
    <property type="match status" value="1"/>
</dbReference>
<dbReference type="SUPFAM" id="SSF48537">
    <property type="entry name" value="Phospholipase C/P1 nuclease"/>
    <property type="match status" value="1"/>
</dbReference>
<name>ENDO3_ARATH</name>
<gene>
    <name evidence="9" type="primary">ENDO3</name>
    <name evidence="11" type="ordered locus">At4g21590</name>
    <name evidence="13" type="ORF">F17L22.50</name>
    <name evidence="12" type="ORF">F18E5.210</name>
</gene>
<evidence type="ECO:0000250" key="1"/>
<evidence type="ECO:0000250" key="2">
    <source>
        <dbReference type="UniProtKB" id="P24021"/>
    </source>
</evidence>
<evidence type="ECO:0000250" key="3">
    <source>
        <dbReference type="UniProtKB" id="P24289"/>
    </source>
</evidence>
<evidence type="ECO:0000250" key="4">
    <source>
        <dbReference type="UniProtKB" id="Q9C9G4"/>
    </source>
</evidence>
<evidence type="ECO:0000255" key="5"/>
<evidence type="ECO:0000255" key="6">
    <source>
        <dbReference type="PROSITE-ProRule" id="PRU00498"/>
    </source>
</evidence>
<evidence type="ECO:0000269" key="7">
    <source>
    </source>
</evidence>
<evidence type="ECO:0000269" key="8">
    <source>
    </source>
</evidence>
<evidence type="ECO:0000303" key="9">
    <source>
    </source>
</evidence>
<evidence type="ECO:0000305" key="10"/>
<evidence type="ECO:0000312" key="11">
    <source>
        <dbReference type="Araport" id="AT4G21590"/>
    </source>
</evidence>
<evidence type="ECO:0000312" key="12">
    <source>
        <dbReference type="EMBL" id="CAA18723.1"/>
    </source>
</evidence>
<evidence type="ECO:0000312" key="13">
    <source>
        <dbReference type="EMBL" id="CAB36803.1"/>
    </source>
</evidence>